<gene>
    <name evidence="1" type="primary">serS</name>
    <name type="ordered locus">Veis_3651</name>
</gene>
<name>SYS_VEREI</name>
<reference key="1">
    <citation type="submission" date="2006-12" db="EMBL/GenBank/DDBJ databases">
        <title>Complete sequence of chromosome 1 of Verminephrobacter eiseniae EF01-2.</title>
        <authorList>
            <person name="Copeland A."/>
            <person name="Lucas S."/>
            <person name="Lapidus A."/>
            <person name="Barry K."/>
            <person name="Detter J.C."/>
            <person name="Glavina del Rio T."/>
            <person name="Dalin E."/>
            <person name="Tice H."/>
            <person name="Pitluck S."/>
            <person name="Chertkov O."/>
            <person name="Brettin T."/>
            <person name="Bruce D."/>
            <person name="Han C."/>
            <person name="Tapia R."/>
            <person name="Gilna P."/>
            <person name="Schmutz J."/>
            <person name="Larimer F."/>
            <person name="Land M."/>
            <person name="Hauser L."/>
            <person name="Kyrpides N."/>
            <person name="Kim E."/>
            <person name="Stahl D."/>
            <person name="Richardson P."/>
        </authorList>
    </citation>
    <scope>NUCLEOTIDE SEQUENCE [LARGE SCALE GENOMIC DNA]</scope>
    <source>
        <strain>EF01-2</strain>
    </source>
</reference>
<sequence>MLDILLLRKDPASAIARLETRQKPQPFLNLSAFQALEAERKTLQTRTEELQSRRNQLSRQIGISLGQGDPGSADTARAQVAASKLELAQSAARLEQIQAELQTMLEAVPNLPHDSVPVGADASGNIELRRWGQPASPAFALKDHVDIGRPLGLDLDLGVKLSGARFAVMKGQIARLHRALAQFMLDVQTGEHGYTECYVPYAVNAESLKGTGQLPKFESDLFSTKKGGQDGEPVPDNTALYLIPTSEVPLTNFVRGLVLTEAELPIRLTAHTPCFRSEAGSYGRDTRGMIRQHQFDKVEMVQIVHPATSYQALEEMTGHAEALLQKLGLPYRVMSLCTGDMGFGAAKTYDLEVWLPAQNSYREISSVSNCEAFQARRLQARFKNAQGKNEPVHTLNGSGLAVGRTLVALLENYQQADGSVTIPPALRPYMAGIAALRP</sequence>
<accession>A1WP10</accession>
<proteinExistence type="inferred from homology"/>
<evidence type="ECO:0000255" key="1">
    <source>
        <dbReference type="HAMAP-Rule" id="MF_00176"/>
    </source>
</evidence>
<dbReference type="EC" id="6.1.1.11" evidence="1"/>
<dbReference type="EMBL" id="CP000542">
    <property type="protein sequence ID" value="ABM59367.1"/>
    <property type="molecule type" value="Genomic_DNA"/>
</dbReference>
<dbReference type="RefSeq" id="WP_011811358.1">
    <property type="nucleotide sequence ID" value="NC_008786.1"/>
</dbReference>
<dbReference type="SMR" id="A1WP10"/>
<dbReference type="STRING" id="391735.Veis_3651"/>
<dbReference type="GeneID" id="76462047"/>
<dbReference type="KEGG" id="vei:Veis_3651"/>
<dbReference type="eggNOG" id="COG0172">
    <property type="taxonomic scope" value="Bacteria"/>
</dbReference>
<dbReference type="HOGENOM" id="CLU_023797_1_1_4"/>
<dbReference type="OrthoDB" id="9804647at2"/>
<dbReference type="UniPathway" id="UPA00906">
    <property type="reaction ID" value="UER00895"/>
</dbReference>
<dbReference type="Proteomes" id="UP000000374">
    <property type="component" value="Chromosome"/>
</dbReference>
<dbReference type="GO" id="GO:0005737">
    <property type="term" value="C:cytoplasm"/>
    <property type="evidence" value="ECO:0007669"/>
    <property type="project" value="UniProtKB-SubCell"/>
</dbReference>
<dbReference type="GO" id="GO:0005524">
    <property type="term" value="F:ATP binding"/>
    <property type="evidence" value="ECO:0007669"/>
    <property type="project" value="UniProtKB-UniRule"/>
</dbReference>
<dbReference type="GO" id="GO:0004828">
    <property type="term" value="F:serine-tRNA ligase activity"/>
    <property type="evidence" value="ECO:0007669"/>
    <property type="project" value="UniProtKB-UniRule"/>
</dbReference>
<dbReference type="GO" id="GO:0016260">
    <property type="term" value="P:selenocysteine biosynthetic process"/>
    <property type="evidence" value="ECO:0007669"/>
    <property type="project" value="UniProtKB-UniRule"/>
</dbReference>
<dbReference type="GO" id="GO:0006434">
    <property type="term" value="P:seryl-tRNA aminoacylation"/>
    <property type="evidence" value="ECO:0007669"/>
    <property type="project" value="UniProtKB-UniRule"/>
</dbReference>
<dbReference type="CDD" id="cd00770">
    <property type="entry name" value="SerRS_core"/>
    <property type="match status" value="1"/>
</dbReference>
<dbReference type="Gene3D" id="3.30.930.10">
    <property type="entry name" value="Bira Bifunctional Protein, Domain 2"/>
    <property type="match status" value="1"/>
</dbReference>
<dbReference type="Gene3D" id="1.10.287.40">
    <property type="entry name" value="Serine-tRNA synthetase, tRNA binding domain"/>
    <property type="match status" value="1"/>
</dbReference>
<dbReference type="HAMAP" id="MF_00176">
    <property type="entry name" value="Ser_tRNA_synth_type1"/>
    <property type="match status" value="1"/>
</dbReference>
<dbReference type="InterPro" id="IPR002314">
    <property type="entry name" value="aa-tRNA-synt_IIb"/>
</dbReference>
<dbReference type="InterPro" id="IPR006195">
    <property type="entry name" value="aa-tRNA-synth_II"/>
</dbReference>
<dbReference type="InterPro" id="IPR045864">
    <property type="entry name" value="aa-tRNA-synth_II/BPL/LPL"/>
</dbReference>
<dbReference type="InterPro" id="IPR002317">
    <property type="entry name" value="Ser-tRNA-ligase_type_1"/>
</dbReference>
<dbReference type="InterPro" id="IPR015866">
    <property type="entry name" value="Ser-tRNA-synth_1_N"/>
</dbReference>
<dbReference type="InterPro" id="IPR042103">
    <property type="entry name" value="SerRS_1_N_sf"/>
</dbReference>
<dbReference type="InterPro" id="IPR033729">
    <property type="entry name" value="SerRS_core"/>
</dbReference>
<dbReference type="InterPro" id="IPR010978">
    <property type="entry name" value="tRNA-bd_arm"/>
</dbReference>
<dbReference type="NCBIfam" id="TIGR00414">
    <property type="entry name" value="serS"/>
    <property type="match status" value="1"/>
</dbReference>
<dbReference type="PANTHER" id="PTHR43697:SF1">
    <property type="entry name" value="SERINE--TRNA LIGASE"/>
    <property type="match status" value="1"/>
</dbReference>
<dbReference type="PANTHER" id="PTHR43697">
    <property type="entry name" value="SERYL-TRNA SYNTHETASE"/>
    <property type="match status" value="1"/>
</dbReference>
<dbReference type="Pfam" id="PF02403">
    <property type="entry name" value="Seryl_tRNA_N"/>
    <property type="match status" value="1"/>
</dbReference>
<dbReference type="Pfam" id="PF00587">
    <property type="entry name" value="tRNA-synt_2b"/>
    <property type="match status" value="1"/>
</dbReference>
<dbReference type="PIRSF" id="PIRSF001529">
    <property type="entry name" value="Ser-tRNA-synth_IIa"/>
    <property type="match status" value="1"/>
</dbReference>
<dbReference type="PRINTS" id="PR00981">
    <property type="entry name" value="TRNASYNTHSER"/>
</dbReference>
<dbReference type="SUPFAM" id="SSF55681">
    <property type="entry name" value="Class II aaRS and biotin synthetases"/>
    <property type="match status" value="1"/>
</dbReference>
<dbReference type="SUPFAM" id="SSF46589">
    <property type="entry name" value="tRNA-binding arm"/>
    <property type="match status" value="1"/>
</dbReference>
<dbReference type="PROSITE" id="PS50862">
    <property type="entry name" value="AA_TRNA_LIGASE_II"/>
    <property type="match status" value="1"/>
</dbReference>
<organism>
    <name type="scientific">Verminephrobacter eiseniae (strain EF01-2)</name>
    <dbReference type="NCBI Taxonomy" id="391735"/>
    <lineage>
        <taxon>Bacteria</taxon>
        <taxon>Pseudomonadati</taxon>
        <taxon>Pseudomonadota</taxon>
        <taxon>Betaproteobacteria</taxon>
        <taxon>Burkholderiales</taxon>
        <taxon>Comamonadaceae</taxon>
        <taxon>Verminephrobacter</taxon>
    </lineage>
</organism>
<comment type="function">
    <text evidence="1">Catalyzes the attachment of serine to tRNA(Ser). Is also able to aminoacylate tRNA(Sec) with serine, to form the misacylated tRNA L-seryl-tRNA(Sec), which will be further converted into selenocysteinyl-tRNA(Sec).</text>
</comment>
<comment type="catalytic activity">
    <reaction evidence="1">
        <text>tRNA(Ser) + L-serine + ATP = L-seryl-tRNA(Ser) + AMP + diphosphate + H(+)</text>
        <dbReference type="Rhea" id="RHEA:12292"/>
        <dbReference type="Rhea" id="RHEA-COMP:9669"/>
        <dbReference type="Rhea" id="RHEA-COMP:9703"/>
        <dbReference type="ChEBI" id="CHEBI:15378"/>
        <dbReference type="ChEBI" id="CHEBI:30616"/>
        <dbReference type="ChEBI" id="CHEBI:33019"/>
        <dbReference type="ChEBI" id="CHEBI:33384"/>
        <dbReference type="ChEBI" id="CHEBI:78442"/>
        <dbReference type="ChEBI" id="CHEBI:78533"/>
        <dbReference type="ChEBI" id="CHEBI:456215"/>
        <dbReference type="EC" id="6.1.1.11"/>
    </reaction>
</comment>
<comment type="catalytic activity">
    <reaction evidence="1">
        <text>tRNA(Sec) + L-serine + ATP = L-seryl-tRNA(Sec) + AMP + diphosphate + H(+)</text>
        <dbReference type="Rhea" id="RHEA:42580"/>
        <dbReference type="Rhea" id="RHEA-COMP:9742"/>
        <dbReference type="Rhea" id="RHEA-COMP:10128"/>
        <dbReference type="ChEBI" id="CHEBI:15378"/>
        <dbReference type="ChEBI" id="CHEBI:30616"/>
        <dbReference type="ChEBI" id="CHEBI:33019"/>
        <dbReference type="ChEBI" id="CHEBI:33384"/>
        <dbReference type="ChEBI" id="CHEBI:78442"/>
        <dbReference type="ChEBI" id="CHEBI:78533"/>
        <dbReference type="ChEBI" id="CHEBI:456215"/>
        <dbReference type="EC" id="6.1.1.11"/>
    </reaction>
</comment>
<comment type="pathway">
    <text evidence="1">Aminoacyl-tRNA biosynthesis; selenocysteinyl-tRNA(Sec) biosynthesis; L-seryl-tRNA(Sec) from L-serine and tRNA(Sec): step 1/1.</text>
</comment>
<comment type="subunit">
    <text evidence="1">Homodimer. The tRNA molecule binds across the dimer.</text>
</comment>
<comment type="subcellular location">
    <subcellularLocation>
        <location evidence="1">Cytoplasm</location>
    </subcellularLocation>
</comment>
<comment type="domain">
    <text evidence="1">Consists of two distinct domains, a catalytic core and a N-terminal extension that is involved in tRNA binding.</text>
</comment>
<comment type="similarity">
    <text evidence="1">Belongs to the class-II aminoacyl-tRNA synthetase family. Type-1 seryl-tRNA synthetase subfamily.</text>
</comment>
<feature type="chain" id="PRO_1000019863" description="Serine--tRNA ligase">
    <location>
        <begin position="1"/>
        <end position="438"/>
    </location>
</feature>
<feature type="binding site" evidence="1">
    <location>
        <begin position="245"/>
        <end position="247"/>
    </location>
    <ligand>
        <name>L-serine</name>
        <dbReference type="ChEBI" id="CHEBI:33384"/>
    </ligand>
</feature>
<feature type="binding site" evidence="1">
    <location>
        <begin position="276"/>
        <end position="278"/>
    </location>
    <ligand>
        <name>ATP</name>
        <dbReference type="ChEBI" id="CHEBI:30616"/>
    </ligand>
</feature>
<feature type="binding site" evidence="1">
    <location>
        <position position="299"/>
    </location>
    <ligand>
        <name>L-serine</name>
        <dbReference type="ChEBI" id="CHEBI:33384"/>
    </ligand>
</feature>
<feature type="binding site" evidence="1">
    <location>
        <begin position="363"/>
        <end position="366"/>
    </location>
    <ligand>
        <name>ATP</name>
        <dbReference type="ChEBI" id="CHEBI:30616"/>
    </ligand>
</feature>
<feature type="binding site" evidence="1">
    <location>
        <position position="398"/>
    </location>
    <ligand>
        <name>L-serine</name>
        <dbReference type="ChEBI" id="CHEBI:33384"/>
    </ligand>
</feature>
<keyword id="KW-0030">Aminoacyl-tRNA synthetase</keyword>
<keyword id="KW-0067">ATP-binding</keyword>
<keyword id="KW-0963">Cytoplasm</keyword>
<keyword id="KW-0436">Ligase</keyword>
<keyword id="KW-0547">Nucleotide-binding</keyword>
<keyword id="KW-0648">Protein biosynthesis</keyword>
<keyword id="KW-1185">Reference proteome</keyword>
<protein>
    <recommendedName>
        <fullName evidence="1">Serine--tRNA ligase</fullName>
        <ecNumber evidence="1">6.1.1.11</ecNumber>
    </recommendedName>
    <alternativeName>
        <fullName evidence="1">Seryl-tRNA synthetase</fullName>
        <shortName evidence="1">SerRS</shortName>
    </alternativeName>
    <alternativeName>
        <fullName evidence="1">Seryl-tRNA(Ser/Sec) synthetase</fullName>
    </alternativeName>
</protein>